<sequence>MIPMRKIKLLSPRLANQIAAGEVVERPSSVIKELLENSLDAGATRLDIEIEDGGIKLMRVRDNGGGIDKDDLPLALSRHATSKIYELDDLEAVATLGFRGEALASISSVARLALVSSTSEDSAGWQVVAEGRDMETQISPAPHPRGTTVEVRDLFFNTPARRKFLRSEKTEYTHLEDVVKRLALSRFDVAFNLRHNGRAIYAWRAGDSQLEQERRVAQVCGPAFMENAVFIEMERGSLRLWGWVAQPTFSRSQADLQHFYVNGRAIRDKLVSHAVRQAYQDVLYHGRHPAFVLYLELDPSTVDVNVHPTKHEVRFRDNRTVHDFIYSSLHHALAKVRPEDTLARKAADLGEDTPGIAPYAVSPRPLVEGIAAGEFKGQGAMSFAPSTSGGYRPGYTSVSPGTIREQMHTYGELLASAEPVTARALPQTPTEDIPPLGYALAQLKGIYILAENAQGLIVVDMHAAHERITYERMKAAYAHGGLQTQPLLVPESIAVSEKEADCAEQFADIFKTLGFELQRAGPETLLIRQLPVILNRAQAEQLVRDVLSDLIEHGTSERIQHHINEILATMACHGSVRANRKLTIPEMNALLRDMEATERSGQCNHGRPTWFLQSLDELDKLFMRGQ</sequence>
<name>MUTL_CELJU</name>
<accession>B3PDC3</accession>
<gene>
    <name evidence="1" type="primary">mutL</name>
    <name type="ordered locus">CJA_3081</name>
</gene>
<dbReference type="EMBL" id="CP000934">
    <property type="protein sequence ID" value="ACE83766.1"/>
    <property type="molecule type" value="Genomic_DNA"/>
</dbReference>
<dbReference type="SMR" id="B3PDC3"/>
<dbReference type="STRING" id="498211.CJA_3081"/>
<dbReference type="KEGG" id="cja:CJA_3081"/>
<dbReference type="eggNOG" id="COG0323">
    <property type="taxonomic scope" value="Bacteria"/>
</dbReference>
<dbReference type="HOGENOM" id="CLU_004131_4_2_6"/>
<dbReference type="Proteomes" id="UP000001036">
    <property type="component" value="Chromosome"/>
</dbReference>
<dbReference type="GO" id="GO:0032300">
    <property type="term" value="C:mismatch repair complex"/>
    <property type="evidence" value="ECO:0007669"/>
    <property type="project" value="InterPro"/>
</dbReference>
<dbReference type="GO" id="GO:0005524">
    <property type="term" value="F:ATP binding"/>
    <property type="evidence" value="ECO:0007669"/>
    <property type="project" value="InterPro"/>
</dbReference>
<dbReference type="GO" id="GO:0016887">
    <property type="term" value="F:ATP hydrolysis activity"/>
    <property type="evidence" value="ECO:0007669"/>
    <property type="project" value="InterPro"/>
</dbReference>
<dbReference type="GO" id="GO:0140664">
    <property type="term" value="F:ATP-dependent DNA damage sensor activity"/>
    <property type="evidence" value="ECO:0007669"/>
    <property type="project" value="InterPro"/>
</dbReference>
<dbReference type="GO" id="GO:0030983">
    <property type="term" value="F:mismatched DNA binding"/>
    <property type="evidence" value="ECO:0007669"/>
    <property type="project" value="InterPro"/>
</dbReference>
<dbReference type="GO" id="GO:0006298">
    <property type="term" value="P:mismatch repair"/>
    <property type="evidence" value="ECO:0007669"/>
    <property type="project" value="UniProtKB-UniRule"/>
</dbReference>
<dbReference type="CDD" id="cd16926">
    <property type="entry name" value="HATPase_MutL-MLH-PMS-like"/>
    <property type="match status" value="1"/>
</dbReference>
<dbReference type="CDD" id="cd03482">
    <property type="entry name" value="MutL_Trans_MutL"/>
    <property type="match status" value="1"/>
</dbReference>
<dbReference type="FunFam" id="3.30.230.10:FF:000013">
    <property type="entry name" value="DNA mismatch repair endonuclease MutL"/>
    <property type="match status" value="1"/>
</dbReference>
<dbReference type="FunFam" id="3.30.565.10:FF:000003">
    <property type="entry name" value="DNA mismatch repair endonuclease MutL"/>
    <property type="match status" value="1"/>
</dbReference>
<dbReference type="FunFam" id="3.30.1370.100:FF:000005">
    <property type="entry name" value="DNA mismatch repair protein MutL"/>
    <property type="match status" value="1"/>
</dbReference>
<dbReference type="Gene3D" id="3.30.230.10">
    <property type="match status" value="1"/>
</dbReference>
<dbReference type="Gene3D" id="3.30.565.10">
    <property type="entry name" value="Histidine kinase-like ATPase, C-terminal domain"/>
    <property type="match status" value="1"/>
</dbReference>
<dbReference type="Gene3D" id="3.30.1540.20">
    <property type="entry name" value="MutL, C-terminal domain, dimerisation subdomain"/>
    <property type="match status" value="1"/>
</dbReference>
<dbReference type="Gene3D" id="3.30.1370.100">
    <property type="entry name" value="MutL, C-terminal domain, regulatory subdomain"/>
    <property type="match status" value="1"/>
</dbReference>
<dbReference type="HAMAP" id="MF_00149">
    <property type="entry name" value="DNA_mis_repair"/>
    <property type="match status" value="1"/>
</dbReference>
<dbReference type="InterPro" id="IPR014762">
    <property type="entry name" value="DNA_mismatch_repair_CS"/>
</dbReference>
<dbReference type="InterPro" id="IPR020667">
    <property type="entry name" value="DNA_mismatch_repair_MutL"/>
</dbReference>
<dbReference type="InterPro" id="IPR013507">
    <property type="entry name" value="DNA_mismatch_S5_2-like"/>
</dbReference>
<dbReference type="InterPro" id="IPR036890">
    <property type="entry name" value="HATPase_C_sf"/>
</dbReference>
<dbReference type="InterPro" id="IPR002099">
    <property type="entry name" value="MutL/Mlh/PMS"/>
</dbReference>
<dbReference type="InterPro" id="IPR038973">
    <property type="entry name" value="MutL/Mlh/Pms-like"/>
</dbReference>
<dbReference type="InterPro" id="IPR014790">
    <property type="entry name" value="MutL_C"/>
</dbReference>
<dbReference type="InterPro" id="IPR042120">
    <property type="entry name" value="MutL_C_dimsub"/>
</dbReference>
<dbReference type="InterPro" id="IPR042121">
    <property type="entry name" value="MutL_C_regsub"/>
</dbReference>
<dbReference type="InterPro" id="IPR037198">
    <property type="entry name" value="MutL_C_sf"/>
</dbReference>
<dbReference type="InterPro" id="IPR020568">
    <property type="entry name" value="Ribosomal_Su5_D2-typ_SF"/>
</dbReference>
<dbReference type="InterPro" id="IPR014721">
    <property type="entry name" value="Ribsml_uS5_D2-typ_fold_subgr"/>
</dbReference>
<dbReference type="NCBIfam" id="TIGR00585">
    <property type="entry name" value="mutl"/>
    <property type="match status" value="1"/>
</dbReference>
<dbReference type="NCBIfam" id="NF000949">
    <property type="entry name" value="PRK00095.1-2"/>
    <property type="match status" value="1"/>
</dbReference>
<dbReference type="PANTHER" id="PTHR10073">
    <property type="entry name" value="DNA MISMATCH REPAIR PROTEIN MLH, PMS, MUTL"/>
    <property type="match status" value="1"/>
</dbReference>
<dbReference type="PANTHER" id="PTHR10073:SF12">
    <property type="entry name" value="DNA MISMATCH REPAIR PROTEIN MLH1"/>
    <property type="match status" value="1"/>
</dbReference>
<dbReference type="Pfam" id="PF01119">
    <property type="entry name" value="DNA_mis_repair"/>
    <property type="match status" value="1"/>
</dbReference>
<dbReference type="Pfam" id="PF13589">
    <property type="entry name" value="HATPase_c_3"/>
    <property type="match status" value="1"/>
</dbReference>
<dbReference type="Pfam" id="PF08676">
    <property type="entry name" value="MutL_C"/>
    <property type="match status" value="1"/>
</dbReference>
<dbReference type="SMART" id="SM01340">
    <property type="entry name" value="DNA_mis_repair"/>
    <property type="match status" value="1"/>
</dbReference>
<dbReference type="SMART" id="SM00853">
    <property type="entry name" value="MutL_C"/>
    <property type="match status" value="1"/>
</dbReference>
<dbReference type="SUPFAM" id="SSF55874">
    <property type="entry name" value="ATPase domain of HSP90 chaperone/DNA topoisomerase II/histidine kinase"/>
    <property type="match status" value="1"/>
</dbReference>
<dbReference type="SUPFAM" id="SSF118116">
    <property type="entry name" value="DNA mismatch repair protein MutL"/>
    <property type="match status" value="1"/>
</dbReference>
<dbReference type="SUPFAM" id="SSF54211">
    <property type="entry name" value="Ribosomal protein S5 domain 2-like"/>
    <property type="match status" value="1"/>
</dbReference>
<dbReference type="PROSITE" id="PS00058">
    <property type="entry name" value="DNA_MISMATCH_REPAIR_1"/>
    <property type="match status" value="1"/>
</dbReference>
<keyword id="KW-0227">DNA damage</keyword>
<keyword id="KW-0234">DNA repair</keyword>
<keyword id="KW-1185">Reference proteome</keyword>
<reference key="1">
    <citation type="journal article" date="2008" name="J. Bacteriol.">
        <title>Insights into plant cell wall degradation from the genome sequence of the soil bacterium Cellvibrio japonicus.</title>
        <authorList>
            <person name="DeBoy R.T."/>
            <person name="Mongodin E.F."/>
            <person name="Fouts D.E."/>
            <person name="Tailford L.E."/>
            <person name="Khouri H."/>
            <person name="Emerson J.B."/>
            <person name="Mohamoud Y."/>
            <person name="Watkins K."/>
            <person name="Henrissat B."/>
            <person name="Gilbert H.J."/>
            <person name="Nelson K.E."/>
        </authorList>
    </citation>
    <scope>NUCLEOTIDE SEQUENCE [LARGE SCALE GENOMIC DNA]</scope>
    <source>
        <strain>Ueda107</strain>
    </source>
</reference>
<feature type="chain" id="PRO_1000096633" description="DNA mismatch repair protein MutL">
    <location>
        <begin position="1"/>
        <end position="626"/>
    </location>
</feature>
<comment type="function">
    <text evidence="1">This protein is involved in the repair of mismatches in DNA. It is required for dam-dependent methyl-directed DNA mismatch repair. May act as a 'molecular matchmaker', a protein that promotes the formation of a stable complex between two or more DNA-binding proteins in an ATP-dependent manner without itself being part of a final effector complex.</text>
</comment>
<comment type="similarity">
    <text evidence="1">Belongs to the DNA mismatch repair MutL/HexB family.</text>
</comment>
<protein>
    <recommendedName>
        <fullName evidence="1">DNA mismatch repair protein MutL</fullName>
    </recommendedName>
</protein>
<proteinExistence type="inferred from homology"/>
<evidence type="ECO:0000255" key="1">
    <source>
        <dbReference type="HAMAP-Rule" id="MF_00149"/>
    </source>
</evidence>
<organism>
    <name type="scientific">Cellvibrio japonicus (strain Ueda107)</name>
    <name type="common">Pseudomonas fluorescens subsp. cellulosa</name>
    <dbReference type="NCBI Taxonomy" id="498211"/>
    <lineage>
        <taxon>Bacteria</taxon>
        <taxon>Pseudomonadati</taxon>
        <taxon>Pseudomonadota</taxon>
        <taxon>Gammaproteobacteria</taxon>
        <taxon>Cellvibrionales</taxon>
        <taxon>Cellvibrionaceae</taxon>
        <taxon>Cellvibrio</taxon>
    </lineage>
</organism>